<keyword id="KW-1185">Reference proteome</keyword>
<keyword id="KW-0687">Ribonucleoprotein</keyword>
<keyword id="KW-0689">Ribosomal protein</keyword>
<comment type="similarity">
    <text evidence="1">Belongs to the eukaryotic ribosomal protein eL40 family.</text>
</comment>
<name>RL40_HALLT</name>
<gene>
    <name evidence="1" type="primary">rpl40e</name>
    <name type="ordered locus">Hlac_0373</name>
</gene>
<feature type="chain" id="PRO_1000148484" description="Large ribosomal subunit protein eL40">
    <location>
        <begin position="1"/>
        <end position="49"/>
    </location>
</feature>
<organism>
    <name type="scientific">Halorubrum lacusprofundi (strain ATCC 49239 / DSM 5036 / JCM 8891 / ACAM 34)</name>
    <dbReference type="NCBI Taxonomy" id="416348"/>
    <lineage>
        <taxon>Archaea</taxon>
        <taxon>Methanobacteriati</taxon>
        <taxon>Methanobacteriota</taxon>
        <taxon>Stenosarchaea group</taxon>
        <taxon>Halobacteria</taxon>
        <taxon>Halobacteriales</taxon>
        <taxon>Haloferacaceae</taxon>
        <taxon>Halorubrum</taxon>
    </lineage>
</organism>
<sequence length="49" mass="5697">MASFDAAERRNLDRHICMRCNARNSPDADRCRKCGYTNLRPKAKERRAA</sequence>
<accession>B9LSD1</accession>
<protein>
    <recommendedName>
        <fullName evidence="1">Large ribosomal subunit protein eL40</fullName>
    </recommendedName>
    <alternativeName>
        <fullName evidence="2">50S ribosomal protein L40e</fullName>
    </alternativeName>
</protein>
<proteinExistence type="inferred from homology"/>
<dbReference type="EMBL" id="CP001365">
    <property type="protein sequence ID" value="ACM55976.1"/>
    <property type="molecule type" value="Genomic_DNA"/>
</dbReference>
<dbReference type="RefSeq" id="WP_008848891.1">
    <property type="nucleotide sequence ID" value="NC_012029.1"/>
</dbReference>
<dbReference type="SMR" id="B9LSD1"/>
<dbReference type="GeneID" id="31400802"/>
<dbReference type="KEGG" id="hla:Hlac_0373"/>
<dbReference type="eggNOG" id="arCOG04049">
    <property type="taxonomic scope" value="Archaea"/>
</dbReference>
<dbReference type="HOGENOM" id="CLU_205640_0_0_2"/>
<dbReference type="Proteomes" id="UP000000740">
    <property type="component" value="Chromosome 1"/>
</dbReference>
<dbReference type="GO" id="GO:1990904">
    <property type="term" value="C:ribonucleoprotein complex"/>
    <property type="evidence" value="ECO:0007669"/>
    <property type="project" value="UniProtKB-KW"/>
</dbReference>
<dbReference type="GO" id="GO:0005840">
    <property type="term" value="C:ribosome"/>
    <property type="evidence" value="ECO:0007669"/>
    <property type="project" value="UniProtKB-KW"/>
</dbReference>
<dbReference type="GO" id="GO:0003735">
    <property type="term" value="F:structural constituent of ribosome"/>
    <property type="evidence" value="ECO:0007669"/>
    <property type="project" value="InterPro"/>
</dbReference>
<dbReference type="GO" id="GO:0006412">
    <property type="term" value="P:translation"/>
    <property type="evidence" value="ECO:0007669"/>
    <property type="project" value="UniProtKB-UniRule"/>
</dbReference>
<dbReference type="Gene3D" id="4.10.1060.50">
    <property type="match status" value="1"/>
</dbReference>
<dbReference type="HAMAP" id="MF_00788">
    <property type="entry name" value="Ribosomal_eL40"/>
    <property type="match status" value="1"/>
</dbReference>
<dbReference type="InterPro" id="IPR023657">
    <property type="entry name" value="Ribosomal_eL40_arc"/>
</dbReference>
<dbReference type="InterPro" id="IPR001975">
    <property type="entry name" value="Ribosomal_eL40_dom"/>
</dbReference>
<dbReference type="InterPro" id="IPR038587">
    <property type="entry name" value="Ribosomal_eL40_sf"/>
</dbReference>
<dbReference type="InterPro" id="IPR011332">
    <property type="entry name" value="Ribosomal_zn-bd"/>
</dbReference>
<dbReference type="NCBIfam" id="NF003161">
    <property type="entry name" value="PRK04136.1"/>
    <property type="match status" value="1"/>
</dbReference>
<dbReference type="PANTHER" id="PTHR39649">
    <property type="entry name" value="50S RIBOSOMAL PROTEIN L40E"/>
    <property type="match status" value="1"/>
</dbReference>
<dbReference type="PANTHER" id="PTHR39649:SF1">
    <property type="entry name" value="LARGE RIBOSOMAL SUBUNIT PROTEIN EL40"/>
    <property type="match status" value="1"/>
</dbReference>
<dbReference type="Pfam" id="PF01020">
    <property type="entry name" value="Ribosomal_L40e"/>
    <property type="match status" value="1"/>
</dbReference>
<dbReference type="SMART" id="SM01377">
    <property type="entry name" value="Ribosomal_L40e"/>
    <property type="match status" value="1"/>
</dbReference>
<dbReference type="SUPFAM" id="SSF57829">
    <property type="entry name" value="Zn-binding ribosomal proteins"/>
    <property type="match status" value="1"/>
</dbReference>
<evidence type="ECO:0000255" key="1">
    <source>
        <dbReference type="HAMAP-Rule" id="MF_00788"/>
    </source>
</evidence>
<evidence type="ECO:0000305" key="2"/>
<reference key="1">
    <citation type="journal article" date="2016" name="Stand. Genomic Sci.">
        <title>Complete genome sequence of the Antarctic Halorubrum lacusprofundi type strain ACAM 34.</title>
        <authorList>
            <person name="Anderson I.J."/>
            <person name="DasSarma P."/>
            <person name="Lucas S."/>
            <person name="Copeland A."/>
            <person name="Lapidus A."/>
            <person name="Del Rio T.G."/>
            <person name="Tice H."/>
            <person name="Dalin E."/>
            <person name="Bruce D.C."/>
            <person name="Goodwin L."/>
            <person name="Pitluck S."/>
            <person name="Sims D."/>
            <person name="Brettin T.S."/>
            <person name="Detter J.C."/>
            <person name="Han C.S."/>
            <person name="Larimer F."/>
            <person name="Hauser L."/>
            <person name="Land M."/>
            <person name="Ivanova N."/>
            <person name="Richardson P."/>
            <person name="Cavicchioli R."/>
            <person name="DasSarma S."/>
            <person name="Woese C.R."/>
            <person name="Kyrpides N.C."/>
        </authorList>
    </citation>
    <scope>NUCLEOTIDE SEQUENCE [LARGE SCALE GENOMIC DNA]</scope>
    <source>
        <strain>ATCC 49239 / DSM 5036 / JCM 8891 / ACAM 34</strain>
    </source>
</reference>